<geneLocation type="plasmid">
    <name>megaplasmid Rsp</name>
</geneLocation>
<feature type="chain" id="PRO_0000098282" description="DNA translocase FtsK 1">
    <location>
        <begin position="1"/>
        <end position="959"/>
    </location>
</feature>
<feature type="transmembrane region" description="Helical" evidence="2">
    <location>
        <begin position="1"/>
        <end position="21"/>
    </location>
</feature>
<feature type="transmembrane region" description="Helical" evidence="2">
    <location>
        <begin position="39"/>
        <end position="59"/>
    </location>
</feature>
<feature type="transmembrane region" description="Helical" evidence="2">
    <location>
        <begin position="83"/>
        <end position="103"/>
    </location>
</feature>
<feature type="topological domain" description="Cytoplasmic" evidence="2">
    <location>
        <begin position="104"/>
        <end position="959"/>
    </location>
</feature>
<feature type="domain" description="FtsK" evidence="3">
    <location>
        <begin position="605"/>
        <end position="814"/>
    </location>
</feature>
<feature type="region of interest" description="Disordered" evidence="4">
    <location>
        <begin position="122"/>
        <end position="427"/>
    </location>
</feature>
<feature type="compositionally biased region" description="Basic and acidic residues" evidence="4">
    <location>
        <begin position="126"/>
        <end position="136"/>
    </location>
</feature>
<feature type="compositionally biased region" description="Low complexity" evidence="4">
    <location>
        <begin position="220"/>
        <end position="229"/>
    </location>
</feature>
<feature type="compositionally biased region" description="Low complexity" evidence="4">
    <location>
        <begin position="264"/>
        <end position="286"/>
    </location>
</feature>
<feature type="compositionally biased region" description="Pro residues" evidence="4">
    <location>
        <begin position="287"/>
        <end position="298"/>
    </location>
</feature>
<feature type="compositionally biased region" description="Acidic residues" evidence="4">
    <location>
        <begin position="333"/>
        <end position="379"/>
    </location>
</feature>
<feature type="compositionally biased region" description="Low complexity" evidence="4">
    <location>
        <begin position="380"/>
        <end position="403"/>
    </location>
</feature>
<feature type="binding site" evidence="3">
    <location>
        <begin position="625"/>
        <end position="630"/>
    </location>
    <ligand>
        <name>ATP</name>
        <dbReference type="ChEBI" id="CHEBI:30616"/>
    </ligand>
</feature>
<sequence>MGLGWFGISSVWLLPMVWRYVARVMAGERGLKGPGTVRIWLATLAVLCASASLEALTSGRDLHGKAGGAVGRGLASLFGHMLGWTGAFLLMLGVLLWVAPMVFGHSWRQLLARLRQAGEAPPVQADARHDEADDGLKPTALGLGGAEQAMGSGHAGASRRHGIEAGSAWRQPAWQPPPRTRESPPQPGEIWPLLNAQGRPEMPLPVAAQPAPVPVPAPAATPKAATQAPSSRSALRATIVSSPFHRPQPSDGDQPPSSPEADDAPSAPVEDAAPAISPAAEPDAPASAPPEPAEPSPPTVDLEAVRQEAEALLAELRGLMTPLAAAPVASPEPEPEPEPEAETEVTPEAEAEPEAEPEAEAEPEAEAEAEAEAEAEPEAEAPAPESVAPALQEAEAATAAEAPLPAPEPAPAIEADDAAPPPPAVPAQKPRIVLPAVVGQVVSNAMPAPAPAAAPVAAAPPAPPRVVDYRLPNVALLTAASPDTVAVPAEHLEETSHLIAQRLAEFKVPVTVAGASAGPVITRFEVDPAIGVRGAQVVGLMKDLARALGVTSIRVVETIPGKTCMGLELPNARRAMIRLSEVVNAPDFQSHASHLVLAMGKDITGNPVVTDLARAPHLLVAGTTGSGKSVAVNAMILSMLYKATPEDVRLIMIDPKMLELSVYEGIPHLLAPVVTDMKQAAHALNWCVGEMEKRYRLMSALGVRNLAGYNQKIRAAQQAGHKVPNPFSLTPDAPEPLSTLPMIVVVIDELADLMMVAGKKIEELIARLAQKARAAGIHLILATQRPSVDVITGLIKANIPTRVAFQVSSKIDSRTILDQMGAETLLGQGDMLFLPPGTGYPQRVHGAFVADEEVHRVVEHWKQFGEPEYDEAILAGDPAEAAAGELFGEGGDAEADPLYDEAAAFVLNTRRASISAVQRQLRIGYNRAARLIEQMEAAGLVSPMGRNGSREVIAPGGGD</sequence>
<organism>
    <name type="scientific">Ralstonia nicotianae (strain ATCC BAA-1114 / GMI1000)</name>
    <name type="common">Ralstonia solanacearum</name>
    <dbReference type="NCBI Taxonomy" id="267608"/>
    <lineage>
        <taxon>Bacteria</taxon>
        <taxon>Pseudomonadati</taxon>
        <taxon>Pseudomonadota</taxon>
        <taxon>Betaproteobacteria</taxon>
        <taxon>Burkholderiales</taxon>
        <taxon>Burkholderiaceae</taxon>
        <taxon>Ralstonia</taxon>
        <taxon>Ralstonia solanacearum species complex</taxon>
    </lineage>
</organism>
<accession>Q8XRH0</accession>
<evidence type="ECO:0000250" key="1"/>
<evidence type="ECO:0000255" key="2"/>
<evidence type="ECO:0000255" key="3">
    <source>
        <dbReference type="PROSITE-ProRule" id="PRU00289"/>
    </source>
</evidence>
<evidence type="ECO:0000256" key="4">
    <source>
        <dbReference type="SAM" id="MobiDB-lite"/>
    </source>
</evidence>
<evidence type="ECO:0000305" key="5"/>
<reference key="1">
    <citation type="journal article" date="2002" name="Nature">
        <title>Genome sequence of the plant pathogen Ralstonia solanacearum.</title>
        <authorList>
            <person name="Salanoubat M."/>
            <person name="Genin S."/>
            <person name="Artiguenave F."/>
            <person name="Gouzy J."/>
            <person name="Mangenot S."/>
            <person name="Arlat M."/>
            <person name="Billault A."/>
            <person name="Brottier P."/>
            <person name="Camus J.-C."/>
            <person name="Cattolico L."/>
            <person name="Chandler M."/>
            <person name="Choisne N."/>
            <person name="Claudel-Renard C."/>
            <person name="Cunnac S."/>
            <person name="Demange N."/>
            <person name="Gaspin C."/>
            <person name="Lavie M."/>
            <person name="Moisan A."/>
            <person name="Robert C."/>
            <person name="Saurin W."/>
            <person name="Schiex T."/>
            <person name="Siguier P."/>
            <person name="Thebault P."/>
            <person name="Whalen M."/>
            <person name="Wincker P."/>
            <person name="Levy M."/>
            <person name="Weissenbach J."/>
            <person name="Boucher C.A."/>
        </authorList>
    </citation>
    <scope>NUCLEOTIDE SEQUENCE [LARGE SCALE GENOMIC DNA]</scope>
    <source>
        <strain>ATCC BAA-1114 / GMI1000</strain>
    </source>
</reference>
<dbReference type="EMBL" id="AL646053">
    <property type="protein sequence ID" value="CAD18035.1"/>
    <property type="molecule type" value="Genomic_DNA"/>
</dbReference>
<dbReference type="RefSeq" id="WP_011004181.1">
    <property type="nucleotide sequence ID" value="NC_003296.1"/>
</dbReference>
<dbReference type="SMR" id="Q8XRH0"/>
<dbReference type="STRING" id="267608.RSp0884"/>
<dbReference type="EnsemblBacteria" id="CAD18035">
    <property type="protein sequence ID" value="CAD18035"/>
    <property type="gene ID" value="RSp0884"/>
</dbReference>
<dbReference type="KEGG" id="rso:RSp0884"/>
<dbReference type="PATRIC" id="fig|267608.8.peg.4360"/>
<dbReference type="eggNOG" id="COG1674">
    <property type="taxonomic scope" value="Bacteria"/>
</dbReference>
<dbReference type="HOGENOM" id="CLU_001981_14_1_4"/>
<dbReference type="Proteomes" id="UP000001436">
    <property type="component" value="Plasmid megaplasmid Rsp"/>
</dbReference>
<dbReference type="GO" id="GO:0005886">
    <property type="term" value="C:plasma membrane"/>
    <property type="evidence" value="ECO:0007669"/>
    <property type="project" value="UniProtKB-SubCell"/>
</dbReference>
<dbReference type="GO" id="GO:0005524">
    <property type="term" value="F:ATP binding"/>
    <property type="evidence" value="ECO:0007669"/>
    <property type="project" value="UniProtKB-KW"/>
</dbReference>
<dbReference type="GO" id="GO:0016887">
    <property type="term" value="F:ATP hydrolysis activity"/>
    <property type="evidence" value="ECO:0007669"/>
    <property type="project" value="InterPro"/>
</dbReference>
<dbReference type="GO" id="GO:0003677">
    <property type="term" value="F:DNA binding"/>
    <property type="evidence" value="ECO:0007669"/>
    <property type="project" value="UniProtKB-KW"/>
</dbReference>
<dbReference type="GO" id="GO:0051301">
    <property type="term" value="P:cell division"/>
    <property type="evidence" value="ECO:0007669"/>
    <property type="project" value="UniProtKB-KW"/>
</dbReference>
<dbReference type="GO" id="GO:0007059">
    <property type="term" value="P:chromosome segregation"/>
    <property type="evidence" value="ECO:0007669"/>
    <property type="project" value="UniProtKB-KW"/>
</dbReference>
<dbReference type="CDD" id="cd01127">
    <property type="entry name" value="TrwB_TraG_TraD_VirD4"/>
    <property type="match status" value="1"/>
</dbReference>
<dbReference type="FunFam" id="3.40.50.300:FF:000209">
    <property type="entry name" value="Cell division protein FtsK"/>
    <property type="match status" value="1"/>
</dbReference>
<dbReference type="Gene3D" id="3.30.980.40">
    <property type="match status" value="1"/>
</dbReference>
<dbReference type="Gene3D" id="3.40.50.300">
    <property type="entry name" value="P-loop containing nucleotide triphosphate hydrolases"/>
    <property type="match status" value="1"/>
</dbReference>
<dbReference type="Gene3D" id="1.10.10.10">
    <property type="entry name" value="Winged helix-like DNA-binding domain superfamily/Winged helix DNA-binding domain"/>
    <property type="match status" value="1"/>
</dbReference>
<dbReference type="InterPro" id="IPR003593">
    <property type="entry name" value="AAA+_ATPase"/>
</dbReference>
<dbReference type="InterPro" id="IPR050206">
    <property type="entry name" value="FtsK/SpoIIIE/SftA"/>
</dbReference>
<dbReference type="InterPro" id="IPR025199">
    <property type="entry name" value="FtsK_4TM"/>
</dbReference>
<dbReference type="InterPro" id="IPR041027">
    <property type="entry name" value="FtsK_alpha"/>
</dbReference>
<dbReference type="InterPro" id="IPR002543">
    <property type="entry name" value="FtsK_dom"/>
</dbReference>
<dbReference type="InterPro" id="IPR018541">
    <property type="entry name" value="Ftsk_gamma"/>
</dbReference>
<dbReference type="InterPro" id="IPR027417">
    <property type="entry name" value="P-loop_NTPase"/>
</dbReference>
<dbReference type="InterPro" id="IPR036388">
    <property type="entry name" value="WH-like_DNA-bd_sf"/>
</dbReference>
<dbReference type="InterPro" id="IPR036390">
    <property type="entry name" value="WH_DNA-bd_sf"/>
</dbReference>
<dbReference type="PANTHER" id="PTHR22683:SF41">
    <property type="entry name" value="DNA TRANSLOCASE FTSK"/>
    <property type="match status" value="1"/>
</dbReference>
<dbReference type="PANTHER" id="PTHR22683">
    <property type="entry name" value="SPORULATION PROTEIN RELATED"/>
    <property type="match status" value="1"/>
</dbReference>
<dbReference type="Pfam" id="PF13491">
    <property type="entry name" value="FtsK_4TM"/>
    <property type="match status" value="1"/>
</dbReference>
<dbReference type="Pfam" id="PF17854">
    <property type="entry name" value="FtsK_alpha"/>
    <property type="match status" value="1"/>
</dbReference>
<dbReference type="Pfam" id="PF09397">
    <property type="entry name" value="FtsK_gamma"/>
    <property type="match status" value="1"/>
</dbReference>
<dbReference type="Pfam" id="PF01580">
    <property type="entry name" value="FtsK_SpoIIIE"/>
    <property type="match status" value="1"/>
</dbReference>
<dbReference type="SMART" id="SM00382">
    <property type="entry name" value="AAA"/>
    <property type="match status" value="1"/>
</dbReference>
<dbReference type="SMART" id="SM00843">
    <property type="entry name" value="Ftsk_gamma"/>
    <property type="match status" value="1"/>
</dbReference>
<dbReference type="SUPFAM" id="SSF52540">
    <property type="entry name" value="P-loop containing nucleoside triphosphate hydrolases"/>
    <property type="match status" value="1"/>
</dbReference>
<dbReference type="SUPFAM" id="SSF46785">
    <property type="entry name" value="Winged helix' DNA-binding domain"/>
    <property type="match status" value="1"/>
</dbReference>
<dbReference type="PROSITE" id="PS50901">
    <property type="entry name" value="FTSK"/>
    <property type="match status" value="1"/>
</dbReference>
<comment type="function">
    <text evidence="1">Essential cell division protein that coordinates cell division and chromosome segregation. The N-terminus is involved in assembly of the cell-division machinery. The C-terminus functions as a DNA motor that moves dsDNA in an ATP-dependent manner towards the dif recombination site, which is located within the replication terminus region. Translocation stops specifically at Xer-dif sites, where FtsK interacts with the Xer recombinase, allowing activation of chromosome unlinking by recombination. FtsK orienting polar sequences (KOPS) guide the direction of DNA translocation. FtsK can remove proteins from DNA as it translocates, but translocation stops specifically at XerCD-dif site, thereby preventing removal of XerC and XerD from dif (By similarity).</text>
</comment>
<comment type="subunit">
    <text evidence="1">Homohexamer. Forms a ring that surrounds DNA (By similarity).</text>
</comment>
<comment type="subcellular location">
    <subcellularLocation>
        <location evidence="1">Cell inner membrane</location>
        <topology evidence="1">Multi-pass membrane protein</topology>
    </subcellularLocation>
    <text evidence="1">Located at the septum.</text>
</comment>
<comment type="domain">
    <text evidence="1">Consists of an N-terminal domain, which is sufficient for the localization to the septal ring and is required for cell division, followed by a linker domain, and a C-terminal domain, which forms the translocation motor involved in chromosome segregation. The C-terminal domain can be further subdivided into alpha, beta and gamma subdomains. The alpha and beta subdomains multimerise to produce a hexameric ring, contain the nucleotide binding motif and form the DNA pump. The gamma subdomain is a regulatory subdomain that controls translocation of DNA by recognition of KOPS motifs and interacts with XerD recombinase (By similarity).</text>
</comment>
<comment type="similarity">
    <text evidence="5">Belongs to the FtsK/SpoIIIE/SftA family.</text>
</comment>
<keyword id="KW-0067">ATP-binding</keyword>
<keyword id="KW-0131">Cell cycle</keyword>
<keyword id="KW-0132">Cell division</keyword>
<keyword id="KW-0997">Cell inner membrane</keyword>
<keyword id="KW-1003">Cell membrane</keyword>
<keyword id="KW-0159">Chromosome partition</keyword>
<keyword id="KW-0238">DNA-binding</keyword>
<keyword id="KW-0472">Membrane</keyword>
<keyword id="KW-0547">Nucleotide-binding</keyword>
<keyword id="KW-0614">Plasmid</keyword>
<keyword id="KW-1185">Reference proteome</keyword>
<keyword id="KW-0812">Transmembrane</keyword>
<keyword id="KW-1133">Transmembrane helix</keyword>
<proteinExistence type="inferred from homology"/>
<gene>
    <name type="primary">ftsK1</name>
    <name type="ordered locus">RSp0884</name>
    <name type="ORF">RS01655</name>
</gene>
<protein>
    <recommendedName>
        <fullName>DNA translocase FtsK 1</fullName>
    </recommendedName>
</protein>
<name>FTSK1_RALN1</name>